<keyword id="KW-0025">Alternative splicing</keyword>
<keyword id="KW-0175">Coiled coil</keyword>
<keyword id="KW-0325">Glycoprotein</keyword>
<keyword id="KW-1185">Reference proteome</keyword>
<keyword id="KW-0964">Secreted</keyword>
<keyword id="KW-0732">Signal</keyword>
<protein>
    <recommendedName>
        <fullName>Leucine zipper protein 2</fullName>
    </recommendedName>
</protein>
<proteinExistence type="evidence at transcript level"/>
<accession>A5D8S1</accession>
<accession>A8WFS7</accession>
<gene>
    <name type="primary">luzp2</name>
    <name type="ORF">si:dkeyp-86e4.1</name>
</gene>
<sequence>MKFIGAVYLLFLLPALSFNSSYEGLEKKLKEVFTERTGILRHLSKTSKELDSIKGNLQSLKNEDAVPKKDVQRILELSHKQRDEMKSLQAALQKQLDDAAERAEKQQATIKFLKMEMEKKTKIIKDLQQENKSLKNKLLSGNKLCDIHAEESKKIQAQLKELRYGKKDLIFKGQQLMDLENKLKVAKDELEKAALDKESQLKALKDTVHICFSSVLHSQTASLHRFPATPTNLLRYSALVNNSRVTFQQPHMKDIPKVPRITTTSKLPVSSAVMRRESTGPKDCQMVKVGSDCSHNQTESSSVMKKTFGHSQSKTPEQNGQGQARTAEESVKTDGELKKTQSDKHN</sequence>
<name>LUZP2_DANRE</name>
<reference key="1">
    <citation type="submission" date="2007-11" db="EMBL/GenBank/DDBJ databases">
        <authorList>
            <consortium name="NIH - Zebrafish Gene Collection (ZGC) project"/>
        </authorList>
    </citation>
    <scope>NUCLEOTIDE SEQUENCE [LARGE SCALE MRNA] (ISOFORMS 1 AND 2)</scope>
    <source>
        <tissue>Brain</tissue>
        <tissue>Embryo</tissue>
    </source>
</reference>
<feature type="signal peptide" evidence="1">
    <location>
        <begin position="1"/>
        <end position="17"/>
    </location>
</feature>
<feature type="chain" id="PRO_0000315277" description="Leucine zipper protein 2">
    <location>
        <begin position="18"/>
        <end position="346"/>
    </location>
</feature>
<feature type="region of interest" description="Leucine-zipper">
    <location>
        <begin position="162"/>
        <end position="190"/>
    </location>
</feature>
<feature type="region of interest" description="Disordered" evidence="2">
    <location>
        <begin position="271"/>
        <end position="346"/>
    </location>
</feature>
<feature type="coiled-coil region" evidence="1">
    <location>
        <begin position="41"/>
        <end position="209"/>
    </location>
</feature>
<feature type="compositionally biased region" description="Polar residues" evidence="2">
    <location>
        <begin position="293"/>
        <end position="324"/>
    </location>
</feature>
<feature type="compositionally biased region" description="Basic and acidic residues" evidence="2">
    <location>
        <begin position="326"/>
        <end position="346"/>
    </location>
</feature>
<feature type="glycosylation site" description="N-linked (GlcNAc...) asparagine" evidence="1">
    <location>
        <position position="19"/>
    </location>
</feature>
<feature type="glycosylation site" description="N-linked (GlcNAc...) asparagine" evidence="1">
    <location>
        <position position="131"/>
    </location>
</feature>
<feature type="glycosylation site" description="N-linked (GlcNAc...) asparagine" evidence="1">
    <location>
        <position position="241"/>
    </location>
</feature>
<feature type="glycosylation site" description="N-linked (GlcNAc...) asparagine" evidence="1">
    <location>
        <position position="296"/>
    </location>
</feature>
<feature type="splice variant" id="VSP_032044" description="In isoform 2." evidence="3">
    <location>
        <begin position="253"/>
        <end position="287"/>
    </location>
</feature>
<feature type="sequence conflict" description="In Ref. 1; AAI41789." evidence="4" ref="1">
    <original>K</original>
    <variation>R</variation>
    <location>
        <position position="205"/>
    </location>
</feature>
<organism>
    <name type="scientific">Danio rerio</name>
    <name type="common">Zebrafish</name>
    <name type="synonym">Brachydanio rerio</name>
    <dbReference type="NCBI Taxonomy" id="7955"/>
    <lineage>
        <taxon>Eukaryota</taxon>
        <taxon>Metazoa</taxon>
        <taxon>Chordata</taxon>
        <taxon>Craniata</taxon>
        <taxon>Vertebrata</taxon>
        <taxon>Euteleostomi</taxon>
        <taxon>Actinopterygii</taxon>
        <taxon>Neopterygii</taxon>
        <taxon>Teleostei</taxon>
        <taxon>Ostariophysi</taxon>
        <taxon>Cypriniformes</taxon>
        <taxon>Danionidae</taxon>
        <taxon>Danioninae</taxon>
        <taxon>Danio</taxon>
    </lineage>
</organism>
<comment type="subcellular location">
    <subcellularLocation>
        <location evidence="4">Secreted</location>
    </subcellularLocation>
</comment>
<comment type="alternative products">
    <event type="alternative splicing"/>
    <isoform>
        <id>A5D8S1-1</id>
        <name>1</name>
        <sequence type="displayed"/>
    </isoform>
    <isoform>
        <id>A5D8S1-2</id>
        <name>2</name>
        <sequence type="described" ref="VSP_032044"/>
    </isoform>
</comment>
<evidence type="ECO:0000255" key="1"/>
<evidence type="ECO:0000256" key="2">
    <source>
        <dbReference type="SAM" id="MobiDB-lite"/>
    </source>
</evidence>
<evidence type="ECO:0000303" key="3">
    <source ref="1"/>
</evidence>
<evidence type="ECO:0000305" key="4"/>
<dbReference type="EMBL" id="BC141788">
    <property type="protein sequence ID" value="AAI41789.1"/>
    <property type="molecule type" value="mRNA"/>
</dbReference>
<dbReference type="EMBL" id="BC154442">
    <property type="protein sequence ID" value="AAI54443.1"/>
    <property type="molecule type" value="mRNA"/>
</dbReference>
<dbReference type="RefSeq" id="NP_001092725.1">
    <property type="nucleotide sequence ID" value="NM_001099255.1"/>
</dbReference>
<dbReference type="RefSeq" id="NP_001108187.1">
    <molecule id="A5D8S1-1"/>
    <property type="nucleotide sequence ID" value="NM_001114715.1"/>
</dbReference>
<dbReference type="SMR" id="A5D8S1"/>
<dbReference type="FunCoup" id="A5D8S1">
    <property type="interactions" value="51"/>
</dbReference>
<dbReference type="STRING" id="7955.ENSDARP00000113593"/>
<dbReference type="GlyCosmos" id="A5D8S1">
    <property type="glycosylation" value="4 sites, No reported glycans"/>
</dbReference>
<dbReference type="PaxDb" id="7955-ENSDARP00000113593"/>
<dbReference type="Ensembl" id="ENSDART00000146120">
    <molecule id="A5D8S1-1"/>
    <property type="protein sequence ID" value="ENSDARP00000113593"/>
    <property type="gene ID" value="ENSDARG00000068247"/>
</dbReference>
<dbReference type="GeneID" id="100137118"/>
<dbReference type="KEGG" id="dre:100137118"/>
<dbReference type="AGR" id="ZFIN:ZDB-GENE-060503-278"/>
<dbReference type="CTD" id="338645"/>
<dbReference type="ZFIN" id="ZDB-GENE-060503-278">
    <property type="gene designation" value="luzp2"/>
</dbReference>
<dbReference type="eggNOG" id="ENOG502QV95">
    <property type="taxonomic scope" value="Eukaryota"/>
</dbReference>
<dbReference type="HOGENOM" id="CLU_068900_0_0_1"/>
<dbReference type="InParanoid" id="A5D8S1"/>
<dbReference type="OMA" id="EGKTCSM"/>
<dbReference type="OrthoDB" id="8767066at2759"/>
<dbReference type="PhylomeDB" id="A5D8S1"/>
<dbReference type="TreeFam" id="TF331644"/>
<dbReference type="PRO" id="PR:A5D8S1"/>
<dbReference type="Proteomes" id="UP000000437">
    <property type="component" value="Alternate scaffold 18"/>
</dbReference>
<dbReference type="Proteomes" id="UP000000437">
    <property type="component" value="Chromosome 18"/>
</dbReference>
<dbReference type="Bgee" id="ENSDARG00000068247">
    <property type="expression patterns" value="Expressed in brain and 13 other cell types or tissues"/>
</dbReference>
<dbReference type="GO" id="GO:0005576">
    <property type="term" value="C:extracellular region"/>
    <property type="evidence" value="ECO:0007669"/>
    <property type="project" value="UniProtKB-SubCell"/>
</dbReference>
<dbReference type="InterPro" id="IPR026718">
    <property type="entry name" value="Luzp2"/>
</dbReference>
<dbReference type="PANTHER" id="PTHR22414">
    <property type="entry name" value="LEUCINE ZIPPER PROTEIN 2"/>
    <property type="match status" value="1"/>
</dbReference>
<dbReference type="PANTHER" id="PTHR22414:SF0">
    <property type="entry name" value="LEUCINE ZIPPER PROTEIN 2"/>
    <property type="match status" value="1"/>
</dbReference>